<protein>
    <recommendedName>
        <fullName>Isopentenyl-diphosphate Delta-isomerase 1</fullName>
        <ecNumber evidence="3">5.3.3.2</ecNumber>
    </recommendedName>
    <alternativeName>
        <fullName>Isopentenyl pyrophosphate isomerase 1</fullName>
        <shortName>IPP isomerase 1</shortName>
        <shortName>IPPI1</shortName>
    </alternativeName>
</protein>
<organism>
    <name type="scientific">Mus musculus</name>
    <name type="common">Mouse</name>
    <dbReference type="NCBI Taxonomy" id="10090"/>
    <lineage>
        <taxon>Eukaryota</taxon>
        <taxon>Metazoa</taxon>
        <taxon>Chordata</taxon>
        <taxon>Craniata</taxon>
        <taxon>Vertebrata</taxon>
        <taxon>Euteleostomi</taxon>
        <taxon>Mammalia</taxon>
        <taxon>Eutheria</taxon>
        <taxon>Euarchontoglires</taxon>
        <taxon>Glires</taxon>
        <taxon>Rodentia</taxon>
        <taxon>Myomorpha</taxon>
        <taxon>Muroidea</taxon>
        <taxon>Muridae</taxon>
        <taxon>Murinae</taxon>
        <taxon>Mus</taxon>
        <taxon>Mus</taxon>
    </lineage>
</organism>
<evidence type="ECO:0000250" key="1"/>
<evidence type="ECO:0000250" key="2">
    <source>
        <dbReference type="UniProtKB" id="O35586"/>
    </source>
</evidence>
<evidence type="ECO:0000250" key="3">
    <source>
        <dbReference type="UniProtKB" id="Q13907"/>
    </source>
</evidence>
<evidence type="ECO:0000255" key="4">
    <source>
        <dbReference type="PROSITE-ProRule" id="PRU00794"/>
    </source>
</evidence>
<evidence type="ECO:0000305" key="5"/>
<comment type="function">
    <text evidence="3">Catalyzes the 1,3-allylic rearrangement of the homoallylic substrate isopentenyl (IPP) to its highly electrophilic allylic isomer, dimethylallyl diphosphate (DMAPP).</text>
</comment>
<comment type="catalytic activity">
    <reaction evidence="3">
        <text>isopentenyl diphosphate = dimethylallyl diphosphate</text>
        <dbReference type="Rhea" id="RHEA:23284"/>
        <dbReference type="ChEBI" id="CHEBI:57623"/>
        <dbReference type="ChEBI" id="CHEBI:128769"/>
        <dbReference type="EC" id="5.3.3.2"/>
    </reaction>
</comment>
<comment type="cofactor">
    <cofactor evidence="3">
        <name>Mg(2+)</name>
        <dbReference type="ChEBI" id="CHEBI:18420"/>
    </cofactor>
    <text evidence="3">Binds 1 Mg(2+) ion per subunit.</text>
</comment>
<comment type="pathway">
    <text evidence="3">Isoprenoid biosynthesis; dimethylallyl diphosphate biosynthesis; dimethylallyl diphosphate from isopentenyl diphosphate: step 1/1.</text>
</comment>
<comment type="subunit">
    <text evidence="3">Monomer.</text>
</comment>
<comment type="subcellular location">
    <subcellularLocation>
        <location evidence="2">Peroxisome</location>
    </subcellularLocation>
</comment>
<comment type="similarity">
    <text evidence="5">Belongs to the IPP isomerase type 1 family.</text>
</comment>
<proteinExistence type="evidence at protein level"/>
<sequence length="227" mass="26289">MPEINTSHLDEKQVQLLAEMCILIDENDNKIGADTKKNCHLNENIDKGLLHRAFSVFLFNTENKLLLQQRSDAKITFPGCFTNSCCSHPLSNPGELEENNAIGVKRAAKRRLKAELGIPLEEVDLNEMDYLTRIYYKAQSDGIWGEHEVDYILFLRKNVTLNPDPNEIKSYCYVSKEEVREILKKAASGEIKLTPWFKIIADTFLFKWWDNLNHLSPFVDHEKIHRL</sequence>
<name>IDI1_MOUSE</name>
<feature type="chain" id="PRO_0000205225" description="Isopentenyl-diphosphate Delta-isomerase 1">
    <location>
        <begin position="1"/>
        <end position="227"/>
    </location>
</feature>
<feature type="domain" description="Nudix hydrolase" evidence="4">
    <location>
        <begin position="49"/>
        <end position="199"/>
    </location>
</feature>
<feature type="short sequence motif" description="Microbody targeting signal">
    <location>
        <begin position="225"/>
        <end position="227"/>
    </location>
</feature>
<feature type="active site" evidence="1">
    <location>
        <position position="86"/>
    </location>
</feature>
<feature type="active site" evidence="1">
    <location>
        <position position="148"/>
    </location>
</feature>
<feature type="binding site" evidence="1">
    <location>
        <position position="36"/>
    </location>
    <ligand>
        <name>substrate</name>
    </ligand>
</feature>
<feature type="binding site" evidence="1">
    <location>
        <position position="40"/>
    </location>
    <ligand>
        <name>Mg(2+)</name>
        <dbReference type="ChEBI" id="CHEBI:18420"/>
    </ligand>
</feature>
<feature type="binding site" evidence="1">
    <location>
        <position position="51"/>
    </location>
    <ligand>
        <name>Mg(2+)</name>
        <dbReference type="ChEBI" id="CHEBI:18420"/>
    </ligand>
</feature>
<feature type="binding site" evidence="1">
    <location>
        <position position="70"/>
    </location>
    <ligand>
        <name>substrate</name>
    </ligand>
</feature>
<feature type="binding site" evidence="1">
    <location>
        <position position="74"/>
    </location>
    <ligand>
        <name>substrate</name>
    </ligand>
</feature>
<feature type="binding site" evidence="1">
    <location>
        <position position="87"/>
    </location>
    <ligand>
        <name>substrate</name>
    </ligand>
</feature>
<feature type="binding site" evidence="1">
    <location>
        <position position="146"/>
    </location>
    <ligand>
        <name>Mg(2+)</name>
        <dbReference type="ChEBI" id="CHEBI:18420"/>
    </ligand>
</feature>
<feature type="binding site" evidence="1">
    <location>
        <position position="148"/>
    </location>
    <ligand>
        <name>Mg(2+)</name>
        <dbReference type="ChEBI" id="CHEBI:18420"/>
    </ligand>
</feature>
<feature type="modified residue" description="N6-acetyllysine" evidence="3">
    <location>
        <position position="176"/>
    </location>
</feature>
<dbReference type="EC" id="5.3.3.2" evidence="3"/>
<dbReference type="EMBL" id="AK029302">
    <property type="protein sequence ID" value="BAC26382.1"/>
    <property type="molecule type" value="mRNA"/>
</dbReference>
<dbReference type="EMBL" id="AK160832">
    <property type="protein sequence ID" value="BAE36037.1"/>
    <property type="molecule type" value="mRNA"/>
</dbReference>
<dbReference type="EMBL" id="CT010310">
    <property type="protein sequence ID" value="CAJ18518.1"/>
    <property type="molecule type" value="mRNA"/>
</dbReference>
<dbReference type="EMBL" id="BC004801">
    <property type="protein sequence ID" value="AAH04801.1"/>
    <property type="molecule type" value="mRNA"/>
</dbReference>
<dbReference type="EMBL" id="BC110313">
    <property type="protein sequence ID" value="AAI10314.1"/>
    <property type="molecule type" value="mRNA"/>
</dbReference>
<dbReference type="RefSeq" id="NP_663335.2">
    <property type="nucleotide sequence ID" value="NM_145360.2"/>
</dbReference>
<dbReference type="RefSeq" id="XP_006498576.1">
    <property type="nucleotide sequence ID" value="XM_006498513.3"/>
</dbReference>
<dbReference type="SMR" id="P58044"/>
<dbReference type="BioGRID" id="235354">
    <property type="interactions" value="1"/>
</dbReference>
<dbReference type="FunCoup" id="P58044">
    <property type="interactions" value="3263"/>
</dbReference>
<dbReference type="IntAct" id="P58044">
    <property type="interactions" value="2"/>
</dbReference>
<dbReference type="MINT" id="P58044"/>
<dbReference type="STRING" id="10090.ENSMUSP00000132780"/>
<dbReference type="GlyGen" id="P58044">
    <property type="glycosylation" value="2 sites, 1 N-linked glycan (1 site), 1 O-linked glycan (1 site)"/>
</dbReference>
<dbReference type="iPTMnet" id="P58044"/>
<dbReference type="PhosphoSitePlus" id="P58044"/>
<dbReference type="SwissPalm" id="P58044"/>
<dbReference type="jPOST" id="P58044"/>
<dbReference type="PaxDb" id="10090-ENSMUSP00000132780"/>
<dbReference type="PeptideAtlas" id="P58044"/>
<dbReference type="ProteomicsDB" id="273265"/>
<dbReference type="Pumba" id="P58044"/>
<dbReference type="DNASU" id="319554"/>
<dbReference type="Ensembl" id="ENSMUST00000240539.1">
    <property type="protein sequence ID" value="ENSMUSP00000159471.1"/>
    <property type="gene ID" value="ENSMUSG00000058258.16"/>
</dbReference>
<dbReference type="GeneID" id="319554"/>
<dbReference type="KEGG" id="mmu:319554"/>
<dbReference type="AGR" id="MGI:2442264"/>
<dbReference type="CTD" id="3422"/>
<dbReference type="MGI" id="MGI:2442264">
    <property type="gene designation" value="Idi1"/>
</dbReference>
<dbReference type="eggNOG" id="KOG0142">
    <property type="taxonomic scope" value="Eukaryota"/>
</dbReference>
<dbReference type="GeneTree" id="ENSGT00390000008527"/>
<dbReference type="InParanoid" id="P58044"/>
<dbReference type="OrthoDB" id="510307at2759"/>
<dbReference type="PhylomeDB" id="P58044"/>
<dbReference type="Reactome" id="R-MMU-191273">
    <property type="pathway name" value="Cholesterol biosynthesis"/>
</dbReference>
<dbReference type="UniPathway" id="UPA00059">
    <property type="reaction ID" value="UER00104"/>
</dbReference>
<dbReference type="BioGRID-ORCS" id="319554">
    <property type="hits" value="21 hits in 78 CRISPR screens"/>
</dbReference>
<dbReference type="PRO" id="PR:P58044"/>
<dbReference type="Proteomes" id="UP000000589">
    <property type="component" value="Chromosome 13"/>
</dbReference>
<dbReference type="RNAct" id="P58044">
    <property type="molecule type" value="protein"/>
</dbReference>
<dbReference type="GO" id="GO:0005739">
    <property type="term" value="C:mitochondrion"/>
    <property type="evidence" value="ECO:0007005"/>
    <property type="project" value="MGI"/>
</dbReference>
<dbReference type="GO" id="GO:0005777">
    <property type="term" value="C:peroxisome"/>
    <property type="evidence" value="ECO:0000266"/>
    <property type="project" value="MGI"/>
</dbReference>
<dbReference type="GO" id="GO:0004452">
    <property type="term" value="F:isopentenyl-diphosphate delta-isomerase activity"/>
    <property type="evidence" value="ECO:0007669"/>
    <property type="project" value="UniProtKB-EC"/>
</dbReference>
<dbReference type="GO" id="GO:0046872">
    <property type="term" value="F:metal ion binding"/>
    <property type="evidence" value="ECO:0007669"/>
    <property type="project" value="UniProtKB-KW"/>
</dbReference>
<dbReference type="GO" id="GO:0006695">
    <property type="term" value="P:cholesterol biosynthetic process"/>
    <property type="evidence" value="ECO:0007669"/>
    <property type="project" value="UniProtKB-KW"/>
</dbReference>
<dbReference type="GO" id="GO:0050992">
    <property type="term" value="P:dimethylallyl diphosphate biosynthetic process"/>
    <property type="evidence" value="ECO:0007669"/>
    <property type="project" value="UniProtKB-UniPathway"/>
</dbReference>
<dbReference type="GO" id="GO:0008299">
    <property type="term" value="P:isoprenoid biosynthetic process"/>
    <property type="evidence" value="ECO:0007669"/>
    <property type="project" value="UniProtKB-KW"/>
</dbReference>
<dbReference type="GO" id="GO:0035634">
    <property type="term" value="P:response to stilbenoid"/>
    <property type="evidence" value="ECO:0000270"/>
    <property type="project" value="UniProtKB"/>
</dbReference>
<dbReference type="CDD" id="cd02885">
    <property type="entry name" value="NUDIX_IPP_Isomerase"/>
    <property type="match status" value="1"/>
</dbReference>
<dbReference type="FunFam" id="3.90.79.10:FF:000012">
    <property type="entry name" value="Isopentenyl-diphosphate Delta-isomerase 1"/>
    <property type="match status" value="1"/>
</dbReference>
<dbReference type="Gene3D" id="3.90.79.10">
    <property type="entry name" value="Nucleoside Triphosphate Pyrophosphohydrolase"/>
    <property type="match status" value="1"/>
</dbReference>
<dbReference type="InterPro" id="IPR011876">
    <property type="entry name" value="IsopentenylPP_isomerase_typ1"/>
</dbReference>
<dbReference type="InterPro" id="IPR015797">
    <property type="entry name" value="NUDIX_hydrolase-like_dom_sf"/>
</dbReference>
<dbReference type="InterPro" id="IPR000086">
    <property type="entry name" value="NUDIX_hydrolase_dom"/>
</dbReference>
<dbReference type="NCBIfam" id="TIGR02150">
    <property type="entry name" value="IPP_isom_1"/>
    <property type="match status" value="1"/>
</dbReference>
<dbReference type="PANTHER" id="PTHR10885">
    <property type="entry name" value="ISOPENTENYL-DIPHOSPHATE DELTA-ISOMERASE"/>
    <property type="match status" value="1"/>
</dbReference>
<dbReference type="PANTHER" id="PTHR10885:SF5">
    <property type="entry name" value="ISOPENTENYL-DIPHOSPHATE DELTA-ISOMERASE 1"/>
    <property type="match status" value="1"/>
</dbReference>
<dbReference type="Pfam" id="PF00293">
    <property type="entry name" value="NUDIX"/>
    <property type="match status" value="1"/>
</dbReference>
<dbReference type="PIRSF" id="PIRSF018427">
    <property type="entry name" value="Isopntndiph_ism"/>
    <property type="match status" value="1"/>
</dbReference>
<dbReference type="SUPFAM" id="SSF55811">
    <property type="entry name" value="Nudix"/>
    <property type="match status" value="1"/>
</dbReference>
<dbReference type="PROSITE" id="PS51462">
    <property type="entry name" value="NUDIX"/>
    <property type="match status" value="1"/>
</dbReference>
<keyword id="KW-0007">Acetylation</keyword>
<keyword id="KW-0152">Cholesterol biosynthesis</keyword>
<keyword id="KW-0153">Cholesterol metabolism</keyword>
<keyword id="KW-0413">Isomerase</keyword>
<keyword id="KW-0414">Isoprene biosynthesis</keyword>
<keyword id="KW-0444">Lipid biosynthesis</keyword>
<keyword id="KW-0443">Lipid metabolism</keyword>
<keyword id="KW-0460">Magnesium</keyword>
<keyword id="KW-0479">Metal-binding</keyword>
<keyword id="KW-0576">Peroxisome</keyword>
<keyword id="KW-1185">Reference proteome</keyword>
<keyword id="KW-0752">Steroid biosynthesis</keyword>
<keyword id="KW-0753">Steroid metabolism</keyword>
<keyword id="KW-0756">Sterol biosynthesis</keyword>
<keyword id="KW-1207">Sterol metabolism</keyword>
<accession>P58044</accession>
<accession>Q4FJU2</accession>
<gene>
    <name type="primary">Idi1</name>
</gene>
<reference key="1">
    <citation type="journal article" date="2005" name="Science">
        <title>The transcriptional landscape of the mammalian genome.</title>
        <authorList>
            <person name="Carninci P."/>
            <person name="Kasukawa T."/>
            <person name="Katayama S."/>
            <person name="Gough J."/>
            <person name="Frith M.C."/>
            <person name="Maeda N."/>
            <person name="Oyama R."/>
            <person name="Ravasi T."/>
            <person name="Lenhard B."/>
            <person name="Wells C."/>
            <person name="Kodzius R."/>
            <person name="Shimokawa K."/>
            <person name="Bajic V.B."/>
            <person name="Brenner S.E."/>
            <person name="Batalov S."/>
            <person name="Forrest A.R."/>
            <person name="Zavolan M."/>
            <person name="Davis M.J."/>
            <person name="Wilming L.G."/>
            <person name="Aidinis V."/>
            <person name="Allen J.E."/>
            <person name="Ambesi-Impiombato A."/>
            <person name="Apweiler R."/>
            <person name="Aturaliya R.N."/>
            <person name="Bailey T.L."/>
            <person name="Bansal M."/>
            <person name="Baxter L."/>
            <person name="Beisel K.W."/>
            <person name="Bersano T."/>
            <person name="Bono H."/>
            <person name="Chalk A.M."/>
            <person name="Chiu K.P."/>
            <person name="Choudhary V."/>
            <person name="Christoffels A."/>
            <person name="Clutterbuck D.R."/>
            <person name="Crowe M.L."/>
            <person name="Dalla E."/>
            <person name="Dalrymple B.P."/>
            <person name="de Bono B."/>
            <person name="Della Gatta G."/>
            <person name="di Bernardo D."/>
            <person name="Down T."/>
            <person name="Engstrom P."/>
            <person name="Fagiolini M."/>
            <person name="Faulkner G."/>
            <person name="Fletcher C.F."/>
            <person name="Fukushima T."/>
            <person name="Furuno M."/>
            <person name="Futaki S."/>
            <person name="Gariboldi M."/>
            <person name="Georgii-Hemming P."/>
            <person name="Gingeras T.R."/>
            <person name="Gojobori T."/>
            <person name="Green R.E."/>
            <person name="Gustincich S."/>
            <person name="Harbers M."/>
            <person name="Hayashi Y."/>
            <person name="Hensch T.K."/>
            <person name="Hirokawa N."/>
            <person name="Hill D."/>
            <person name="Huminiecki L."/>
            <person name="Iacono M."/>
            <person name="Ikeo K."/>
            <person name="Iwama A."/>
            <person name="Ishikawa T."/>
            <person name="Jakt M."/>
            <person name="Kanapin A."/>
            <person name="Katoh M."/>
            <person name="Kawasawa Y."/>
            <person name="Kelso J."/>
            <person name="Kitamura H."/>
            <person name="Kitano H."/>
            <person name="Kollias G."/>
            <person name="Krishnan S.P."/>
            <person name="Kruger A."/>
            <person name="Kummerfeld S.K."/>
            <person name="Kurochkin I.V."/>
            <person name="Lareau L.F."/>
            <person name="Lazarevic D."/>
            <person name="Lipovich L."/>
            <person name="Liu J."/>
            <person name="Liuni S."/>
            <person name="McWilliam S."/>
            <person name="Madan Babu M."/>
            <person name="Madera M."/>
            <person name="Marchionni L."/>
            <person name="Matsuda H."/>
            <person name="Matsuzawa S."/>
            <person name="Miki H."/>
            <person name="Mignone F."/>
            <person name="Miyake S."/>
            <person name="Morris K."/>
            <person name="Mottagui-Tabar S."/>
            <person name="Mulder N."/>
            <person name="Nakano N."/>
            <person name="Nakauchi H."/>
            <person name="Ng P."/>
            <person name="Nilsson R."/>
            <person name="Nishiguchi S."/>
            <person name="Nishikawa S."/>
            <person name="Nori F."/>
            <person name="Ohara O."/>
            <person name="Okazaki Y."/>
            <person name="Orlando V."/>
            <person name="Pang K.C."/>
            <person name="Pavan W.J."/>
            <person name="Pavesi G."/>
            <person name="Pesole G."/>
            <person name="Petrovsky N."/>
            <person name="Piazza S."/>
            <person name="Reed J."/>
            <person name="Reid J.F."/>
            <person name="Ring B.Z."/>
            <person name="Ringwald M."/>
            <person name="Rost B."/>
            <person name="Ruan Y."/>
            <person name="Salzberg S.L."/>
            <person name="Sandelin A."/>
            <person name="Schneider C."/>
            <person name="Schoenbach C."/>
            <person name="Sekiguchi K."/>
            <person name="Semple C.A."/>
            <person name="Seno S."/>
            <person name="Sessa L."/>
            <person name="Sheng Y."/>
            <person name="Shibata Y."/>
            <person name="Shimada H."/>
            <person name="Shimada K."/>
            <person name="Silva D."/>
            <person name="Sinclair B."/>
            <person name="Sperling S."/>
            <person name="Stupka E."/>
            <person name="Sugiura K."/>
            <person name="Sultana R."/>
            <person name="Takenaka Y."/>
            <person name="Taki K."/>
            <person name="Tammoja K."/>
            <person name="Tan S.L."/>
            <person name="Tang S."/>
            <person name="Taylor M.S."/>
            <person name="Tegner J."/>
            <person name="Teichmann S.A."/>
            <person name="Ueda H.R."/>
            <person name="van Nimwegen E."/>
            <person name="Verardo R."/>
            <person name="Wei C.L."/>
            <person name="Yagi K."/>
            <person name="Yamanishi H."/>
            <person name="Zabarovsky E."/>
            <person name="Zhu S."/>
            <person name="Zimmer A."/>
            <person name="Hide W."/>
            <person name="Bult C."/>
            <person name="Grimmond S.M."/>
            <person name="Teasdale R.D."/>
            <person name="Liu E.T."/>
            <person name="Brusic V."/>
            <person name="Quackenbush J."/>
            <person name="Wahlestedt C."/>
            <person name="Mattick J.S."/>
            <person name="Hume D.A."/>
            <person name="Kai C."/>
            <person name="Sasaki D."/>
            <person name="Tomaru Y."/>
            <person name="Fukuda S."/>
            <person name="Kanamori-Katayama M."/>
            <person name="Suzuki M."/>
            <person name="Aoki J."/>
            <person name="Arakawa T."/>
            <person name="Iida J."/>
            <person name="Imamura K."/>
            <person name="Itoh M."/>
            <person name="Kato T."/>
            <person name="Kawaji H."/>
            <person name="Kawagashira N."/>
            <person name="Kawashima T."/>
            <person name="Kojima M."/>
            <person name="Kondo S."/>
            <person name="Konno H."/>
            <person name="Nakano K."/>
            <person name="Ninomiya N."/>
            <person name="Nishio T."/>
            <person name="Okada M."/>
            <person name="Plessy C."/>
            <person name="Shibata K."/>
            <person name="Shiraki T."/>
            <person name="Suzuki S."/>
            <person name="Tagami M."/>
            <person name="Waki K."/>
            <person name="Watahiki A."/>
            <person name="Okamura-Oho Y."/>
            <person name="Suzuki H."/>
            <person name="Kawai J."/>
            <person name="Hayashizaki Y."/>
        </authorList>
    </citation>
    <scope>NUCLEOTIDE SEQUENCE [LARGE SCALE MRNA]</scope>
    <source>
        <strain>C57BL/6J</strain>
        <tissue>Head</tissue>
    </source>
</reference>
<reference key="2">
    <citation type="submission" date="2005-07" db="EMBL/GenBank/DDBJ databases">
        <title>Cloning of mouse full open reading frames in Gateway(R) system entry vector (pDONR201).</title>
        <authorList>
            <person name="Ebert L."/>
            <person name="Muenstermann E."/>
            <person name="Schatten R."/>
            <person name="Henze S."/>
            <person name="Bohn E."/>
            <person name="Mollenhauer J."/>
            <person name="Wiemann S."/>
            <person name="Schick M."/>
            <person name="Korn B."/>
        </authorList>
    </citation>
    <scope>NUCLEOTIDE SEQUENCE [LARGE SCALE MRNA]</scope>
</reference>
<reference key="3">
    <citation type="journal article" date="2004" name="Genome Res.">
        <title>The status, quality, and expansion of the NIH full-length cDNA project: the Mammalian Gene Collection (MGC).</title>
        <authorList>
            <consortium name="The MGC Project Team"/>
        </authorList>
    </citation>
    <scope>NUCLEOTIDE SEQUENCE [LARGE SCALE MRNA]</scope>
    <source>
        <strain>Czech II</strain>
        <tissue>Mammary tumor</tissue>
    </source>
</reference>
<reference key="4">
    <citation type="journal article" date="2010" name="Cell">
        <title>A tissue-specific atlas of mouse protein phosphorylation and expression.</title>
        <authorList>
            <person name="Huttlin E.L."/>
            <person name="Jedrychowski M.P."/>
            <person name="Elias J.E."/>
            <person name="Goswami T."/>
            <person name="Rad R."/>
            <person name="Beausoleil S.A."/>
            <person name="Villen J."/>
            <person name="Haas W."/>
            <person name="Sowa M.E."/>
            <person name="Gygi S.P."/>
        </authorList>
    </citation>
    <scope>IDENTIFICATION BY MASS SPECTROMETRY [LARGE SCALE ANALYSIS]</scope>
    <source>
        <tissue>Brain</tissue>
        <tissue>Brown adipose tissue</tissue>
        <tissue>Heart</tissue>
        <tissue>Kidney</tissue>
        <tissue>Liver</tissue>
        <tissue>Lung</tissue>
        <tissue>Pancreas</tissue>
        <tissue>Spleen</tissue>
        <tissue>Testis</tissue>
    </source>
</reference>